<dbReference type="EMBL" id="CU928158">
    <property type="protein sequence ID" value="CAQ90131.1"/>
    <property type="molecule type" value="Genomic_DNA"/>
</dbReference>
<dbReference type="RefSeq" id="WP_000158144.1">
    <property type="nucleotide sequence ID" value="NC_011740.1"/>
</dbReference>
<dbReference type="KEGG" id="efe:EFER_2636"/>
<dbReference type="HOGENOM" id="CLU_106619_1_0_6"/>
<dbReference type="OrthoDB" id="9798918at2"/>
<dbReference type="Proteomes" id="UP000000745">
    <property type="component" value="Chromosome"/>
</dbReference>
<dbReference type="CDD" id="cd18720">
    <property type="entry name" value="PIN_YqxD-like"/>
    <property type="match status" value="1"/>
</dbReference>
<dbReference type="HAMAP" id="MF_00489">
    <property type="entry name" value="UPF0178"/>
    <property type="match status" value="1"/>
</dbReference>
<dbReference type="InterPro" id="IPR003791">
    <property type="entry name" value="UPF0178"/>
</dbReference>
<dbReference type="NCBIfam" id="NF001095">
    <property type="entry name" value="PRK00124.1"/>
    <property type="match status" value="1"/>
</dbReference>
<dbReference type="PANTHER" id="PTHR35146">
    <property type="entry name" value="UPF0178 PROTEIN YAII"/>
    <property type="match status" value="1"/>
</dbReference>
<dbReference type="PANTHER" id="PTHR35146:SF1">
    <property type="entry name" value="UPF0178 PROTEIN YAII"/>
    <property type="match status" value="1"/>
</dbReference>
<dbReference type="Pfam" id="PF02639">
    <property type="entry name" value="DUF188"/>
    <property type="match status" value="1"/>
</dbReference>
<comment type="similarity">
    <text evidence="1">Belongs to the UPF0178 family.</text>
</comment>
<accession>B7LMJ8</accession>
<feature type="chain" id="PRO_1000126193" description="UPF0178 protein YaiI">
    <location>
        <begin position="1"/>
        <end position="154"/>
    </location>
</feature>
<protein>
    <recommendedName>
        <fullName evidence="1">UPF0178 protein YaiI</fullName>
    </recommendedName>
</protein>
<name>YAII_ESCF3</name>
<sequence>MTIWVDADACPNVIKEILYRAAERMQLPLILVANQSLRVPPSRFIRTLRVAAGFDVADNEIVRQCEPGDLVITADIPLASEVLAKGAAALNPRGERYSEATIRERLTMRDFMDTLRASGIQTGGPDALSPRDRQHFAAELDKWWLEAKRKKESM</sequence>
<proteinExistence type="inferred from homology"/>
<gene>
    <name evidence="1" type="primary">yaiI</name>
    <name type="ordered locus">EFER_2636</name>
</gene>
<organism>
    <name type="scientific">Escherichia fergusonii (strain ATCC 35469 / DSM 13698 / CCUG 18766 / IAM 14443 / JCM 21226 / LMG 7866 / NBRC 102419 / NCTC 12128 / CDC 0568-73)</name>
    <dbReference type="NCBI Taxonomy" id="585054"/>
    <lineage>
        <taxon>Bacteria</taxon>
        <taxon>Pseudomonadati</taxon>
        <taxon>Pseudomonadota</taxon>
        <taxon>Gammaproteobacteria</taxon>
        <taxon>Enterobacterales</taxon>
        <taxon>Enterobacteriaceae</taxon>
        <taxon>Escherichia</taxon>
    </lineage>
</organism>
<evidence type="ECO:0000255" key="1">
    <source>
        <dbReference type="HAMAP-Rule" id="MF_00489"/>
    </source>
</evidence>
<reference key="1">
    <citation type="journal article" date="2009" name="PLoS Genet.">
        <title>Organised genome dynamics in the Escherichia coli species results in highly diverse adaptive paths.</title>
        <authorList>
            <person name="Touchon M."/>
            <person name="Hoede C."/>
            <person name="Tenaillon O."/>
            <person name="Barbe V."/>
            <person name="Baeriswyl S."/>
            <person name="Bidet P."/>
            <person name="Bingen E."/>
            <person name="Bonacorsi S."/>
            <person name="Bouchier C."/>
            <person name="Bouvet O."/>
            <person name="Calteau A."/>
            <person name="Chiapello H."/>
            <person name="Clermont O."/>
            <person name="Cruveiller S."/>
            <person name="Danchin A."/>
            <person name="Diard M."/>
            <person name="Dossat C."/>
            <person name="Karoui M.E."/>
            <person name="Frapy E."/>
            <person name="Garry L."/>
            <person name="Ghigo J.M."/>
            <person name="Gilles A.M."/>
            <person name="Johnson J."/>
            <person name="Le Bouguenec C."/>
            <person name="Lescat M."/>
            <person name="Mangenot S."/>
            <person name="Martinez-Jehanne V."/>
            <person name="Matic I."/>
            <person name="Nassif X."/>
            <person name="Oztas S."/>
            <person name="Petit M.A."/>
            <person name="Pichon C."/>
            <person name="Rouy Z."/>
            <person name="Ruf C.S."/>
            <person name="Schneider D."/>
            <person name="Tourret J."/>
            <person name="Vacherie B."/>
            <person name="Vallenet D."/>
            <person name="Medigue C."/>
            <person name="Rocha E.P.C."/>
            <person name="Denamur E."/>
        </authorList>
    </citation>
    <scope>NUCLEOTIDE SEQUENCE [LARGE SCALE GENOMIC DNA]</scope>
    <source>
        <strain>ATCC 35469 / DSM 13698 / BCRC 15582 / CCUG 18766 / IAM 14443 / JCM 21226 / LMG 7866 / NBRC 102419 / NCTC 12128 / CDC 0568-73</strain>
    </source>
</reference>